<comment type="function">
    <text evidence="1">This is one of the proteins that bind and probably mediate the attachment of the 5S RNA into the large ribosomal subunit, where it forms part of the central protuberance. In the 70S ribosome it contacts protein S13 of the 30S subunit (bridge B1b), connecting the 2 subunits; this bridge is implicated in subunit movement. Contacts the P site tRNA; the 5S rRNA and some of its associated proteins might help stabilize positioning of ribosome-bound tRNAs.</text>
</comment>
<comment type="subunit">
    <text evidence="1">Part of the 50S ribosomal subunit; part of the 5S rRNA/L5/L18/L25 subcomplex. Contacts the 5S rRNA and the P site tRNA. Forms a bridge to the 30S subunit in the 70S ribosome.</text>
</comment>
<comment type="similarity">
    <text evidence="1">Belongs to the universal ribosomal protein uL5 family.</text>
</comment>
<feature type="chain" id="PRO_0000125009" description="Large ribosomal subunit protein uL5">
    <location>
        <begin position="1"/>
        <end position="179"/>
    </location>
</feature>
<proteinExistence type="inferred from homology"/>
<dbReference type="EMBL" id="BX569694">
    <property type="protein sequence ID" value="CAE08594.1"/>
    <property type="molecule type" value="Genomic_DNA"/>
</dbReference>
<dbReference type="RefSeq" id="WP_011128937.1">
    <property type="nucleotide sequence ID" value="NC_005070.1"/>
</dbReference>
<dbReference type="SMR" id="Q7U4I8"/>
<dbReference type="STRING" id="84588.SYNW2079"/>
<dbReference type="KEGG" id="syw:SYNW2079"/>
<dbReference type="eggNOG" id="COG0094">
    <property type="taxonomic scope" value="Bacteria"/>
</dbReference>
<dbReference type="HOGENOM" id="CLU_061015_2_1_3"/>
<dbReference type="Proteomes" id="UP000001422">
    <property type="component" value="Chromosome"/>
</dbReference>
<dbReference type="GO" id="GO:1990904">
    <property type="term" value="C:ribonucleoprotein complex"/>
    <property type="evidence" value="ECO:0007669"/>
    <property type="project" value="UniProtKB-KW"/>
</dbReference>
<dbReference type="GO" id="GO:0005840">
    <property type="term" value="C:ribosome"/>
    <property type="evidence" value="ECO:0007669"/>
    <property type="project" value="UniProtKB-KW"/>
</dbReference>
<dbReference type="GO" id="GO:0019843">
    <property type="term" value="F:rRNA binding"/>
    <property type="evidence" value="ECO:0007669"/>
    <property type="project" value="UniProtKB-UniRule"/>
</dbReference>
<dbReference type="GO" id="GO:0003735">
    <property type="term" value="F:structural constituent of ribosome"/>
    <property type="evidence" value="ECO:0007669"/>
    <property type="project" value="InterPro"/>
</dbReference>
<dbReference type="GO" id="GO:0000049">
    <property type="term" value="F:tRNA binding"/>
    <property type="evidence" value="ECO:0007669"/>
    <property type="project" value="UniProtKB-UniRule"/>
</dbReference>
<dbReference type="GO" id="GO:0006412">
    <property type="term" value="P:translation"/>
    <property type="evidence" value="ECO:0007669"/>
    <property type="project" value="UniProtKB-UniRule"/>
</dbReference>
<dbReference type="FunFam" id="3.30.1440.10:FF:000001">
    <property type="entry name" value="50S ribosomal protein L5"/>
    <property type="match status" value="1"/>
</dbReference>
<dbReference type="Gene3D" id="3.30.1440.10">
    <property type="match status" value="1"/>
</dbReference>
<dbReference type="HAMAP" id="MF_01333_B">
    <property type="entry name" value="Ribosomal_uL5_B"/>
    <property type="match status" value="1"/>
</dbReference>
<dbReference type="InterPro" id="IPR002132">
    <property type="entry name" value="Ribosomal_uL5"/>
</dbReference>
<dbReference type="InterPro" id="IPR020930">
    <property type="entry name" value="Ribosomal_uL5_bac-type"/>
</dbReference>
<dbReference type="InterPro" id="IPR031309">
    <property type="entry name" value="Ribosomal_uL5_C"/>
</dbReference>
<dbReference type="InterPro" id="IPR020929">
    <property type="entry name" value="Ribosomal_uL5_CS"/>
</dbReference>
<dbReference type="InterPro" id="IPR022803">
    <property type="entry name" value="Ribosomal_uL5_dom_sf"/>
</dbReference>
<dbReference type="InterPro" id="IPR031310">
    <property type="entry name" value="Ribosomal_uL5_N"/>
</dbReference>
<dbReference type="NCBIfam" id="NF000585">
    <property type="entry name" value="PRK00010.1"/>
    <property type="match status" value="1"/>
</dbReference>
<dbReference type="PANTHER" id="PTHR11994">
    <property type="entry name" value="60S RIBOSOMAL PROTEIN L11-RELATED"/>
    <property type="match status" value="1"/>
</dbReference>
<dbReference type="Pfam" id="PF00281">
    <property type="entry name" value="Ribosomal_L5"/>
    <property type="match status" value="1"/>
</dbReference>
<dbReference type="Pfam" id="PF00673">
    <property type="entry name" value="Ribosomal_L5_C"/>
    <property type="match status" value="1"/>
</dbReference>
<dbReference type="PIRSF" id="PIRSF002161">
    <property type="entry name" value="Ribosomal_L5"/>
    <property type="match status" value="1"/>
</dbReference>
<dbReference type="SUPFAM" id="SSF55282">
    <property type="entry name" value="RL5-like"/>
    <property type="match status" value="1"/>
</dbReference>
<dbReference type="PROSITE" id="PS00358">
    <property type="entry name" value="RIBOSOMAL_L5"/>
    <property type="match status" value="1"/>
</dbReference>
<gene>
    <name evidence="1" type="primary">rplE</name>
    <name evidence="1" type="synonym">rpl5</name>
    <name type="ordered locus">SYNW2079</name>
</gene>
<sequence>MSLKKRYRETIQPKLQKDLSLTNIHEVPKVVKVTVNRGLGEAAANAKSLEASVNELAQITGQKVVVTRAKKAIAAFKIRQGMPIGCAVTLRGDRMYAFLERLINLALPRIRDFRGVSPKSFDGRGNYTLGVREQIIFPEISFDKIDAIRGMDITIVTTARSDEEGRALLREMGMPFQSN</sequence>
<keyword id="KW-0687">Ribonucleoprotein</keyword>
<keyword id="KW-0689">Ribosomal protein</keyword>
<keyword id="KW-0694">RNA-binding</keyword>
<keyword id="KW-0699">rRNA-binding</keyword>
<keyword id="KW-0820">tRNA-binding</keyword>
<reference key="1">
    <citation type="journal article" date="2003" name="Nature">
        <title>The genome of a motile marine Synechococcus.</title>
        <authorList>
            <person name="Palenik B."/>
            <person name="Brahamsha B."/>
            <person name="Larimer F.W."/>
            <person name="Land M.L."/>
            <person name="Hauser L."/>
            <person name="Chain P."/>
            <person name="Lamerdin J.E."/>
            <person name="Regala W."/>
            <person name="Allen E.E."/>
            <person name="McCarren J."/>
            <person name="Paulsen I.T."/>
            <person name="Dufresne A."/>
            <person name="Partensky F."/>
            <person name="Webb E.A."/>
            <person name="Waterbury J."/>
        </authorList>
    </citation>
    <scope>NUCLEOTIDE SEQUENCE [LARGE SCALE GENOMIC DNA]</scope>
    <source>
        <strain>WH8102</strain>
    </source>
</reference>
<protein>
    <recommendedName>
        <fullName evidence="1">Large ribosomal subunit protein uL5</fullName>
    </recommendedName>
    <alternativeName>
        <fullName evidence="2">50S ribosomal protein L5</fullName>
    </alternativeName>
</protein>
<name>RL5_PARMW</name>
<organism>
    <name type="scientific">Parasynechococcus marenigrum (strain WH8102)</name>
    <dbReference type="NCBI Taxonomy" id="84588"/>
    <lineage>
        <taxon>Bacteria</taxon>
        <taxon>Bacillati</taxon>
        <taxon>Cyanobacteriota</taxon>
        <taxon>Cyanophyceae</taxon>
        <taxon>Synechococcales</taxon>
        <taxon>Prochlorococcaceae</taxon>
        <taxon>Parasynechococcus</taxon>
        <taxon>Parasynechococcus marenigrum</taxon>
    </lineage>
</organism>
<accession>Q7U4I8</accession>
<evidence type="ECO:0000255" key="1">
    <source>
        <dbReference type="HAMAP-Rule" id="MF_01333"/>
    </source>
</evidence>
<evidence type="ECO:0000305" key="2"/>